<proteinExistence type="inferred from homology"/>
<accession>A5EAG2</accession>
<protein>
    <recommendedName>
        <fullName evidence="1">UPF0262 protein BBta_0898</fullName>
    </recommendedName>
</protein>
<reference key="1">
    <citation type="journal article" date="2007" name="Science">
        <title>Legumes symbioses: absence of nod genes in photosynthetic bradyrhizobia.</title>
        <authorList>
            <person name="Giraud E."/>
            <person name="Moulin L."/>
            <person name="Vallenet D."/>
            <person name="Barbe V."/>
            <person name="Cytryn E."/>
            <person name="Avarre J.-C."/>
            <person name="Jaubert M."/>
            <person name="Simon D."/>
            <person name="Cartieaux F."/>
            <person name="Prin Y."/>
            <person name="Bena G."/>
            <person name="Hannibal L."/>
            <person name="Fardoux J."/>
            <person name="Kojadinovic M."/>
            <person name="Vuillet L."/>
            <person name="Lajus A."/>
            <person name="Cruveiller S."/>
            <person name="Rouy Z."/>
            <person name="Mangenot S."/>
            <person name="Segurens B."/>
            <person name="Dossat C."/>
            <person name="Franck W.L."/>
            <person name="Chang W.-S."/>
            <person name="Saunders E."/>
            <person name="Bruce D."/>
            <person name="Richardson P."/>
            <person name="Normand P."/>
            <person name="Dreyfus B."/>
            <person name="Pignol D."/>
            <person name="Stacey G."/>
            <person name="Emerich D."/>
            <person name="Vermeglio A."/>
            <person name="Medigue C."/>
            <person name="Sadowsky M."/>
        </authorList>
    </citation>
    <scope>NUCLEOTIDE SEQUENCE [LARGE SCALE GENOMIC DNA]</scope>
    <source>
        <strain>BTAi1 / ATCC BAA-1182</strain>
    </source>
</reference>
<name>Y898_BRASB</name>
<dbReference type="EMBL" id="CP000494">
    <property type="protein sequence ID" value="ABQ33156.1"/>
    <property type="molecule type" value="Genomic_DNA"/>
</dbReference>
<dbReference type="RefSeq" id="WP_008962298.1">
    <property type="nucleotide sequence ID" value="NC_009485.1"/>
</dbReference>
<dbReference type="STRING" id="288000.BBta_0898"/>
<dbReference type="KEGG" id="bbt:BBta_0898"/>
<dbReference type="eggNOG" id="COG5328">
    <property type="taxonomic scope" value="Bacteria"/>
</dbReference>
<dbReference type="HOGENOM" id="CLU_112904_0_0_5"/>
<dbReference type="OrthoDB" id="9798434at2"/>
<dbReference type="Proteomes" id="UP000000246">
    <property type="component" value="Chromosome"/>
</dbReference>
<dbReference type="HAMAP" id="MF_00678">
    <property type="entry name" value="UPF0262"/>
    <property type="match status" value="1"/>
</dbReference>
<dbReference type="InterPro" id="IPR008321">
    <property type="entry name" value="UCP032146"/>
</dbReference>
<dbReference type="NCBIfam" id="NF002769">
    <property type="entry name" value="PRK02853.1"/>
    <property type="match status" value="1"/>
</dbReference>
<dbReference type="Pfam" id="PF06793">
    <property type="entry name" value="UPF0262"/>
    <property type="match status" value="1"/>
</dbReference>
<dbReference type="PIRSF" id="PIRSF032146">
    <property type="entry name" value="UCP032146"/>
    <property type="match status" value="1"/>
</dbReference>
<comment type="similarity">
    <text evidence="1">Belongs to the UPF0262 family.</text>
</comment>
<gene>
    <name type="ordered locus">BBta_0898</name>
</gene>
<organism>
    <name type="scientific">Bradyrhizobium sp. (strain BTAi1 / ATCC BAA-1182)</name>
    <dbReference type="NCBI Taxonomy" id="288000"/>
    <lineage>
        <taxon>Bacteria</taxon>
        <taxon>Pseudomonadati</taxon>
        <taxon>Pseudomonadota</taxon>
        <taxon>Alphaproteobacteria</taxon>
        <taxon>Hyphomicrobiales</taxon>
        <taxon>Nitrobacteraceae</taxon>
        <taxon>Bradyrhizobium</taxon>
    </lineage>
</organism>
<sequence length="168" mass="19065">MTQHPPGDDRTNRIVAVTLDEESIGRSGPDIEHERAIAIYDLVEENLFAPEGADGQGPFTLHLGITANRLMFDIRKEDGTPVVTHLLSLSPFRRIVKDYFMICDSYYNAIRTATPDKIEAIDMGRRGIHDEGSRTLQERLKGKVRVDFETSRRLFTLITVLHWKGEGQ</sequence>
<feature type="chain" id="PRO_0000314189" description="UPF0262 protein BBta_0898">
    <location>
        <begin position="1"/>
        <end position="168"/>
    </location>
</feature>
<evidence type="ECO:0000255" key="1">
    <source>
        <dbReference type="HAMAP-Rule" id="MF_00678"/>
    </source>
</evidence>
<keyword id="KW-1185">Reference proteome</keyword>